<dbReference type="EMBL" id="ADTL01000141">
    <property type="protein sequence ID" value="EFJ98158.1"/>
    <property type="molecule type" value="Genomic_DNA"/>
</dbReference>
<dbReference type="RefSeq" id="WP_001101343.1">
    <property type="nucleotide sequence ID" value="NZ_GG771785.1"/>
</dbReference>
<dbReference type="PDB" id="6P8V">
    <property type="method" value="X-ray"/>
    <property type="resolution" value="2.64 A"/>
    <property type="chains" value="A/B/C/D/E/F=3-308"/>
</dbReference>
<dbReference type="PDBsum" id="6P8V"/>
<dbReference type="SMR" id="D7Y2H4"/>
<dbReference type="HOGENOM" id="CLU_058955_0_0_6"/>
<dbReference type="GO" id="GO:0005524">
    <property type="term" value="F:ATP binding"/>
    <property type="evidence" value="ECO:0007669"/>
    <property type="project" value="UniProtKB-KW"/>
</dbReference>
<dbReference type="GO" id="GO:0016887">
    <property type="term" value="F:ATP hydrolysis activity"/>
    <property type="evidence" value="ECO:0007669"/>
    <property type="project" value="InterPro"/>
</dbReference>
<dbReference type="GO" id="GO:0051607">
    <property type="term" value="P:defense response to virus"/>
    <property type="evidence" value="ECO:0007669"/>
    <property type="project" value="UniProtKB-KW"/>
</dbReference>
<dbReference type="Gene3D" id="3.40.50.300">
    <property type="entry name" value="P-loop containing nucleotide triphosphate hydrolases"/>
    <property type="match status" value="1"/>
</dbReference>
<dbReference type="InterPro" id="IPR003593">
    <property type="entry name" value="AAA+_ATPase"/>
</dbReference>
<dbReference type="InterPro" id="IPR003959">
    <property type="entry name" value="ATPase_AAA_core"/>
</dbReference>
<dbReference type="InterPro" id="IPR050304">
    <property type="entry name" value="MT-severing_AAA_ATPase"/>
</dbReference>
<dbReference type="InterPro" id="IPR027417">
    <property type="entry name" value="P-loop_NTPase"/>
</dbReference>
<dbReference type="PANTHER" id="PTHR23074">
    <property type="entry name" value="AAA DOMAIN-CONTAINING"/>
    <property type="match status" value="1"/>
</dbReference>
<dbReference type="PANTHER" id="PTHR23074:SF83">
    <property type="entry name" value="VACUOLAR PROTEIN SORTING-ASSOCIATED PROTEIN 4A"/>
    <property type="match status" value="1"/>
</dbReference>
<dbReference type="Pfam" id="PF00004">
    <property type="entry name" value="AAA"/>
    <property type="match status" value="1"/>
</dbReference>
<dbReference type="SMART" id="SM00382">
    <property type="entry name" value="AAA"/>
    <property type="match status" value="1"/>
</dbReference>
<dbReference type="SUPFAM" id="SSF52540">
    <property type="entry name" value="P-loop containing nucleoside triphosphate hydrolases"/>
    <property type="match status" value="1"/>
</dbReference>
<name>CAP6_ECOM1</name>
<accession>D7Y2H4</accession>
<proteinExistence type="evidence at protein level"/>
<organism>
    <name type="scientific">Escherichia coli (strain MS 115-1)</name>
    <dbReference type="NCBI Taxonomy" id="749537"/>
    <lineage>
        <taxon>Bacteria</taxon>
        <taxon>Pseudomonadati</taxon>
        <taxon>Pseudomonadota</taxon>
        <taxon>Gammaproteobacteria</taxon>
        <taxon>Enterobacterales</taxon>
        <taxon>Enterobacteriaceae</taxon>
        <taxon>Escherichia</taxon>
    </lineage>
</organism>
<evidence type="ECO:0000269" key="1">
    <source>
    </source>
</evidence>
<evidence type="ECO:0000303" key="2">
    <source>
    </source>
</evidence>
<evidence type="ECO:0000303" key="3">
    <source>
    </source>
</evidence>
<evidence type="ECO:0000305" key="4"/>
<evidence type="ECO:0000305" key="5">
    <source>
    </source>
</evidence>
<evidence type="ECO:0000312" key="6">
    <source>
        <dbReference type="EMBL" id="EFJ98158.1"/>
    </source>
</evidence>
<evidence type="ECO:0007744" key="7">
    <source>
        <dbReference type="PDB" id="6P8V"/>
    </source>
</evidence>
<evidence type="ECO:0007829" key="8">
    <source>
        <dbReference type="PDB" id="6P8V"/>
    </source>
</evidence>
<comment type="function">
    <text evidence="1 3">Regulates complex assembly in a CBASS antivirus system. CBASS (cyclic oligonucleotide-based antiphage signaling system) provides immunity against bacteriophage. The CD-NTase protein synthesizes cyclic nucleotides in response to infection; these serve as specific second messenger signals. The signals activate a diverse range of effectors, leading to bacterial cell death and thus abortive phage infection. A type III-C(AAA) CBASS system (PubMed:32839535).</text>
</comment>
<comment type="function">
    <text evidence="1 5">Binds and disassembles an active CdnC:Cap7 (Cap7 is also called HORMA) complex, inhibiting the complex's ability to synthesize cyclic nucleotide second messengers (PubMed:31932165). An AAA+-ATPase remodeler, in the absence of foreign threat Cap6 (also called Trip13) probably maintains the Cap7 protein in its open, inactive state. Once activated (presumably by a bacteriophage protein) Cap7 binds to and activates its cognate CD-NTase (CdnC in this bacteria) to synthesize cAAA, a cyclic nucleotide second messenger. cAAA activates the NucC endonuclease which degrades all DNA in the infected cell, causing cell death and abortive phage infection (Probable).</text>
</comment>
<comment type="function">
    <text evidence="1">Protects E.coli strain JP313 against bacteriophage lambda cI- infection. When the cdnC-cap7-cap6-nucC operon is transformed into a susceptible E.coli strain it confers bacteriophage lambda cI- immunity. Mutations in the sensor (Cap7 also called HORMA) or effector proteins (CdnC, NucC) but not the disassembly protein (Cap6 also called Trip13) no longer confer immunity. The presence of the intact operon leads to culture collapse and cell death, which occurs before the phage has finished its replication cycle, thus protecting non-infected bacteria by aborting the phage infection and preventing its propagation.</text>
</comment>
<comment type="subunit">
    <text evidence="1">Homohexamer. Forms a 1:1:6 CdnC:Cap7:Cap6 complex.</text>
</comment>
<comment type="domain">
    <text evidence="1">In the disassembly complex (PDB:6P8V) Cap6 (this protein) crystallizes as a right-handed spiral; the top 4 subunits bind ATP while the bottom 2 do not. A CdnC monomer lies along the surface of the hexamer at the interface of subunits 5 and 6, with Cap7 (also called HORMA) at its tip, over the central hexamer pore. The N-terminus of Cap7 extends into the pore, contacting 5/6 Cap6 subunits.</text>
</comment>
<comment type="similarity">
    <text evidence="4">Belongs to the AAA ATPase family.</text>
</comment>
<protein>
    <recommendedName>
        <fullName evidence="3">CD-NTase-associated protein 6</fullName>
        <shortName evidence="3">Cap6</shortName>
    </recommendedName>
    <alternativeName>
        <fullName evidence="2">CBASS disassembly protein Trip13</fullName>
    </alternativeName>
    <alternativeName>
        <fullName evidence="2">Probable ATPase Trip13</fullName>
    </alternativeName>
</protein>
<feature type="chain" id="PRO_0000451843" description="CD-NTase-associated protein 6">
    <location>
        <begin position="1"/>
        <end position="311"/>
    </location>
</feature>
<feature type="binding site" evidence="1 7">
    <location>
        <begin position="84"/>
        <end position="89"/>
    </location>
    <ligand>
        <name>ATP</name>
        <dbReference type="ChEBI" id="CHEBI:30616"/>
    </ligand>
</feature>
<feature type="binding site" evidence="1 7">
    <location>
        <begin position="215"/>
        <end position="216"/>
    </location>
    <ligand>
        <name>ATP</name>
        <dbReference type="ChEBI" id="CHEBI:30616"/>
    </ligand>
</feature>
<feature type="mutagenesis site" description="Partially inhibits second messenger synthesis by CdnC:Cap7:DNA complex." evidence="1">
    <original>K</original>
    <variation>A</variation>
    <location>
        <position position="87"/>
    </location>
</feature>
<feature type="mutagenesis site" description="Stabilizes a 1:1:6 CdnC:Cap7:Cap6 complex, probably prevents ATP hydrolysis. Still confers phage immunity." evidence="1">
    <original>E</original>
    <variation>Q</variation>
    <location>
        <position position="159"/>
    </location>
</feature>
<feature type="helix" evidence="8">
    <location>
        <begin position="7"/>
        <end position="11"/>
    </location>
</feature>
<feature type="strand" evidence="8">
    <location>
        <begin position="15"/>
        <end position="18"/>
    </location>
</feature>
<feature type="helix" evidence="8">
    <location>
        <begin position="20"/>
        <end position="28"/>
    </location>
</feature>
<feature type="helix" evidence="8">
    <location>
        <begin position="33"/>
        <end position="47"/>
    </location>
</feature>
<feature type="helix" evidence="8">
    <location>
        <begin position="50"/>
        <end position="59"/>
    </location>
</feature>
<feature type="helix" evidence="8">
    <location>
        <begin position="64"/>
        <end position="71"/>
    </location>
</feature>
<feature type="strand" evidence="8">
    <location>
        <begin position="75"/>
        <end position="82"/>
    </location>
</feature>
<feature type="helix" evidence="8">
    <location>
        <begin position="87"/>
        <end position="101"/>
    </location>
</feature>
<feature type="strand" evidence="8">
    <location>
        <begin position="105"/>
        <end position="111"/>
    </location>
</feature>
<feature type="helix" evidence="8">
    <location>
        <begin position="113"/>
        <end position="115"/>
    </location>
</feature>
<feature type="helix" evidence="8">
    <location>
        <begin position="123"/>
        <end position="141"/>
    </location>
</feature>
<feature type="strand" evidence="8">
    <location>
        <begin position="151"/>
        <end position="158"/>
    </location>
</feature>
<feature type="helix" evidence="8">
    <location>
        <begin position="160"/>
        <end position="163"/>
    </location>
</feature>
<feature type="strand" evidence="8">
    <location>
        <begin position="170"/>
        <end position="172"/>
    </location>
</feature>
<feature type="helix" evidence="8">
    <location>
        <begin position="174"/>
        <end position="192"/>
    </location>
</feature>
<feature type="strand" evidence="8">
    <location>
        <begin position="196"/>
        <end position="204"/>
    </location>
</feature>
<feature type="helix" evidence="8">
    <location>
        <begin position="211"/>
        <end position="216"/>
    </location>
</feature>
<feature type="strand" evidence="8">
    <location>
        <begin position="218"/>
        <end position="223"/>
    </location>
</feature>
<feature type="helix" evidence="8">
    <location>
        <begin position="228"/>
        <end position="239"/>
    </location>
</feature>
<feature type="helix" evidence="8">
    <location>
        <begin position="246"/>
        <end position="255"/>
    </location>
</feature>
<feature type="strand" evidence="8">
    <location>
        <begin position="259"/>
        <end position="263"/>
    </location>
</feature>
<feature type="helix" evidence="8">
    <location>
        <begin position="268"/>
        <end position="272"/>
    </location>
</feature>
<feature type="helix" evidence="8">
    <location>
        <begin position="275"/>
        <end position="283"/>
    </location>
</feature>
<feature type="turn" evidence="8">
    <location>
        <begin position="284"/>
        <end position="286"/>
    </location>
</feature>
<feature type="helix" evidence="8">
    <location>
        <begin position="291"/>
        <end position="300"/>
    </location>
</feature>
<reference key="1">
    <citation type="submission" date="2010-05" db="EMBL/GenBank/DDBJ databases">
        <authorList>
            <person name="Weinstock G."/>
            <person name="Sodergren E."/>
            <person name="Clifton S."/>
            <person name="Fulton L."/>
            <person name="Fulton B."/>
            <person name="Courtney L."/>
            <person name="Fronick C."/>
            <person name="Harrison M."/>
            <person name="Strong C."/>
            <person name="Farmer C."/>
            <person name="Delahaunty K."/>
            <person name="Markovic C."/>
            <person name="Hall O."/>
            <person name="Minx P."/>
            <person name="Tomlinson C."/>
            <person name="Mitreva M."/>
            <person name="Hou S."/>
            <person name="Chen J."/>
            <person name="Wollam A."/>
            <person name="Pepin K.H."/>
            <person name="Johnson M."/>
            <person name="Bhonagiri V."/>
            <person name="Zhang X."/>
            <person name="Suruliraj S."/>
            <person name="Warren W."/>
            <person name="Chinwalla A."/>
            <person name="Mardis E.R."/>
            <person name="Wilson R.K."/>
        </authorList>
    </citation>
    <scope>NUCLEOTIDE SEQUENCE [LARGE SCALE GENOMIC DNA]</scope>
    <source>
        <strain>MS 115-1</strain>
    </source>
</reference>
<reference key="2">
    <citation type="journal article" date="2020" name="Nat. Microbiol.">
        <title>Diversity and classification of cyclic-oligonucleotide-based anti-phage signalling systems.</title>
        <authorList>
            <person name="Millman A."/>
            <person name="Melamed S."/>
            <person name="Amitai G."/>
            <person name="Sorek R."/>
        </authorList>
    </citation>
    <scope>CLASSIFICATION AND NOMENCLATURE</scope>
</reference>
<reference evidence="7" key="3">
    <citation type="journal article" date="2020" name="Mol. Cell">
        <title>HORMA Domain Proteins and a Trip13-like ATPase Regulate Bacterial cGAS-like Enzymes to Mediate Bacteriophage Immunity.</title>
        <authorList>
            <person name="Ye Q."/>
            <person name="Lau R.K."/>
            <person name="Mathews I.T."/>
            <person name="Birkholz E.A."/>
            <person name="Watrous J.D."/>
            <person name="Azimi C.S."/>
            <person name="Pogliano J."/>
            <person name="Jain M."/>
            <person name="Corbett K.D."/>
        </authorList>
    </citation>
    <scope>X-RAY CRYSTALLOGRAPHY (2.64 ANGSTROMS) OF 3-308 IN COMPLEX WITH CDNC AND CAP7</scope>
    <scope>FUNCTION</scope>
    <scope>SUBUNIT</scope>
    <scope>MUTAGENESIS OF LYS-87 AND GLU-159</scope>
    <source>
        <strain>MS 115-1</strain>
    </source>
</reference>
<sequence>MNVKPSLDELFERRINFPDFEPQERLARLVGLDEHKDRLSKILGLLVNPYGIQEWAKKYHPDARAAVDTVLRRPPLVVLAGDVGSGKTELAETIGDAVARQEDIDITLYPLSLATRGQGRVGEMTQLVSAAFDYTIEAADKLKNTNGKARGAVLLLIDEADALAQSRENAQMHHEDRAGVNAFIRGIDRIANQKLPAAVLMCTNRLKALDPAVQRRAAEILTFSRPNDEQRHYLLHSKLTGLGLNSTAVEELVRLTGPRDPNSPGFTFSDITQRLIPSIILAAYPYNAVSVHSALQVVNKMTPTPAFIDRQ</sequence>
<gene>
    <name evidence="3" type="primary">cap6</name>
    <name evidence="2" type="synonym">trip13</name>
    <name evidence="6" type="ORF">HMPREF9540_01760</name>
</gene>
<keyword id="KW-0002">3D-structure</keyword>
<keyword id="KW-0051">Antiviral defense</keyword>
<keyword id="KW-0067">ATP-binding</keyword>
<keyword id="KW-0547">Nucleotide-binding</keyword>